<gene>
    <name evidence="1" type="primary">gcvPB</name>
    <name type="ordered locus">Cvib_0194</name>
</gene>
<protein>
    <recommendedName>
        <fullName evidence="1">Probable glycine dehydrogenase (decarboxylating) subunit 2</fullName>
        <ecNumber evidence="1">1.4.4.2</ecNumber>
    </recommendedName>
    <alternativeName>
        <fullName evidence="1">Glycine cleavage system P-protein subunit 2</fullName>
    </alternativeName>
    <alternativeName>
        <fullName evidence="1">Glycine decarboxylase subunit 2</fullName>
    </alternativeName>
    <alternativeName>
        <fullName evidence="1">Glycine dehydrogenase (aminomethyl-transferring) subunit 2</fullName>
    </alternativeName>
</protein>
<dbReference type="EC" id="1.4.4.2" evidence="1"/>
<dbReference type="EMBL" id="CP000607">
    <property type="protein sequence ID" value="ABP36217.1"/>
    <property type="molecule type" value="Genomic_DNA"/>
</dbReference>
<dbReference type="SMR" id="A4SCK8"/>
<dbReference type="STRING" id="290318.Cvib_0194"/>
<dbReference type="KEGG" id="pvi:Cvib_0194"/>
<dbReference type="eggNOG" id="COG1003">
    <property type="taxonomic scope" value="Bacteria"/>
</dbReference>
<dbReference type="HOGENOM" id="CLU_004620_5_0_10"/>
<dbReference type="OrthoDB" id="9801272at2"/>
<dbReference type="GO" id="GO:0005829">
    <property type="term" value="C:cytosol"/>
    <property type="evidence" value="ECO:0007669"/>
    <property type="project" value="TreeGrafter"/>
</dbReference>
<dbReference type="GO" id="GO:0005960">
    <property type="term" value="C:glycine cleavage complex"/>
    <property type="evidence" value="ECO:0007669"/>
    <property type="project" value="TreeGrafter"/>
</dbReference>
<dbReference type="GO" id="GO:0016594">
    <property type="term" value="F:glycine binding"/>
    <property type="evidence" value="ECO:0007669"/>
    <property type="project" value="TreeGrafter"/>
</dbReference>
<dbReference type="GO" id="GO:0004375">
    <property type="term" value="F:glycine dehydrogenase (decarboxylating) activity"/>
    <property type="evidence" value="ECO:0007669"/>
    <property type="project" value="UniProtKB-EC"/>
</dbReference>
<dbReference type="GO" id="GO:0030170">
    <property type="term" value="F:pyridoxal phosphate binding"/>
    <property type="evidence" value="ECO:0007669"/>
    <property type="project" value="TreeGrafter"/>
</dbReference>
<dbReference type="GO" id="GO:0019464">
    <property type="term" value="P:glycine decarboxylation via glycine cleavage system"/>
    <property type="evidence" value="ECO:0007669"/>
    <property type="project" value="UniProtKB-UniRule"/>
</dbReference>
<dbReference type="CDD" id="cd00613">
    <property type="entry name" value="GDC-P"/>
    <property type="match status" value="1"/>
</dbReference>
<dbReference type="FunFam" id="3.40.640.10:FF:000224">
    <property type="entry name" value="Probable glycine dehydrogenase (decarboxylating) subunit 2"/>
    <property type="match status" value="1"/>
</dbReference>
<dbReference type="FunFam" id="3.90.1150.10:FF:000014">
    <property type="entry name" value="Probable glycine dehydrogenase (decarboxylating) subunit 2"/>
    <property type="match status" value="1"/>
</dbReference>
<dbReference type="Gene3D" id="6.20.440.10">
    <property type="match status" value="1"/>
</dbReference>
<dbReference type="Gene3D" id="3.90.1150.10">
    <property type="entry name" value="Aspartate Aminotransferase, domain 1"/>
    <property type="match status" value="1"/>
</dbReference>
<dbReference type="Gene3D" id="3.40.640.10">
    <property type="entry name" value="Type I PLP-dependent aspartate aminotransferase-like (Major domain)"/>
    <property type="match status" value="1"/>
</dbReference>
<dbReference type="HAMAP" id="MF_00713">
    <property type="entry name" value="GcvPB"/>
    <property type="match status" value="1"/>
</dbReference>
<dbReference type="InterPro" id="IPR023012">
    <property type="entry name" value="GcvPB"/>
</dbReference>
<dbReference type="InterPro" id="IPR049316">
    <property type="entry name" value="GDC-P_C"/>
</dbReference>
<dbReference type="InterPro" id="IPR049315">
    <property type="entry name" value="GDC-P_N"/>
</dbReference>
<dbReference type="InterPro" id="IPR020581">
    <property type="entry name" value="GDC_P"/>
</dbReference>
<dbReference type="InterPro" id="IPR015424">
    <property type="entry name" value="PyrdxlP-dep_Trfase"/>
</dbReference>
<dbReference type="InterPro" id="IPR015421">
    <property type="entry name" value="PyrdxlP-dep_Trfase_major"/>
</dbReference>
<dbReference type="InterPro" id="IPR015422">
    <property type="entry name" value="PyrdxlP-dep_Trfase_small"/>
</dbReference>
<dbReference type="NCBIfam" id="NF003346">
    <property type="entry name" value="PRK04366.1"/>
    <property type="match status" value="1"/>
</dbReference>
<dbReference type="PANTHER" id="PTHR11773:SF1">
    <property type="entry name" value="GLYCINE DEHYDROGENASE (DECARBOXYLATING), MITOCHONDRIAL"/>
    <property type="match status" value="1"/>
</dbReference>
<dbReference type="PANTHER" id="PTHR11773">
    <property type="entry name" value="GLYCINE DEHYDROGENASE, DECARBOXYLATING"/>
    <property type="match status" value="1"/>
</dbReference>
<dbReference type="Pfam" id="PF21478">
    <property type="entry name" value="GcvP2_C"/>
    <property type="match status" value="1"/>
</dbReference>
<dbReference type="Pfam" id="PF02347">
    <property type="entry name" value="GDC-P"/>
    <property type="match status" value="1"/>
</dbReference>
<dbReference type="SUPFAM" id="SSF53383">
    <property type="entry name" value="PLP-dependent transferases"/>
    <property type="match status" value="1"/>
</dbReference>
<accession>A4SCK8</accession>
<proteinExistence type="inferred from homology"/>
<reference key="1">
    <citation type="submission" date="2007-03" db="EMBL/GenBank/DDBJ databases">
        <title>Complete sequence of Prosthecochloris vibrioformis DSM 265.</title>
        <authorList>
            <consortium name="US DOE Joint Genome Institute"/>
            <person name="Copeland A."/>
            <person name="Lucas S."/>
            <person name="Lapidus A."/>
            <person name="Barry K."/>
            <person name="Detter J.C."/>
            <person name="Glavina del Rio T."/>
            <person name="Hammon N."/>
            <person name="Israni S."/>
            <person name="Pitluck S."/>
            <person name="Schmutz J."/>
            <person name="Larimer F."/>
            <person name="Land M."/>
            <person name="Hauser L."/>
            <person name="Mikhailova N."/>
            <person name="Li T."/>
            <person name="Overmann J."/>
            <person name="Schuster S.C."/>
            <person name="Bryant D.A."/>
            <person name="Richardson P."/>
        </authorList>
    </citation>
    <scope>NUCLEOTIDE SEQUENCE [LARGE SCALE GENOMIC DNA]</scope>
    <source>
        <strain>DSM 265 / 1930</strain>
    </source>
</reference>
<feature type="chain" id="PRO_1000083231" description="Probable glycine dehydrogenase (decarboxylating) subunit 2">
    <location>
        <begin position="1"/>
        <end position="485"/>
    </location>
</feature>
<feature type="modified residue" description="N6-(pyridoxal phosphate)lysine" evidence="1">
    <location>
        <position position="269"/>
    </location>
</feature>
<organism>
    <name type="scientific">Chlorobium phaeovibrioides (strain DSM 265 / 1930)</name>
    <name type="common">Prosthecochloris vibrioformis (strain DSM 265)</name>
    <dbReference type="NCBI Taxonomy" id="290318"/>
    <lineage>
        <taxon>Bacteria</taxon>
        <taxon>Pseudomonadati</taxon>
        <taxon>Chlorobiota</taxon>
        <taxon>Chlorobiia</taxon>
        <taxon>Chlorobiales</taxon>
        <taxon>Chlorobiaceae</taxon>
        <taxon>Chlorobium/Pelodictyon group</taxon>
        <taxon>Chlorobium</taxon>
    </lineage>
</organism>
<keyword id="KW-0560">Oxidoreductase</keyword>
<keyword id="KW-0663">Pyridoxal phosphate</keyword>
<name>GCSPB_CHLPM</name>
<sequence>MNEPLISDISRTGRKGYSLNSSDLIRTPHSQLIPGKFLRQSPAELPEVPESEVVRHFLRLSTLNYHVDKDMYPLGSCTMKYNPKINDETCSLEGFAALHPMQPESTVQGALQLMHELSGMLAEITGMASVTLQPAAGAHGELAGILLIKKYHEAQHSKRTTLLVVDSAHGTNPASAALAGYTIVSVKSNGIGRTDLNDLKEKLNGDVAALMLTNPNTIGLFEKEIVAIADMVHKNGSLLYMDGANMNALLGITRPGDMGFDVVHLNLHKTFSAPHGGGGPGSGPVGVCEKLIPHLPVPVIEKRATSEGARYHLTGDCPDSIGRMMNFHGNFAVLIRAYTYIRMLGAEGLRRVSENAIINANYLLSRLDGAYSLPYPKPVLHEFCLSGDLQKKSHGVRTLDIAKRLLDYGFHAPTIYFPLIVSEALMIEPTETESRETLDRFADAMLQIAKEAEECPETVLAAPETTPVRRLDEAMASRQLNICCR</sequence>
<comment type="function">
    <text evidence="1">The glycine cleavage system catalyzes the degradation of glycine. The P protein binds the alpha-amino group of glycine through its pyridoxal phosphate cofactor; CO(2) is released and the remaining methylamine moiety is then transferred to the lipoamide cofactor of the H protein.</text>
</comment>
<comment type="catalytic activity">
    <reaction evidence="1">
        <text>N(6)-[(R)-lipoyl]-L-lysyl-[glycine-cleavage complex H protein] + glycine + H(+) = N(6)-[(R)-S(8)-aminomethyldihydrolipoyl]-L-lysyl-[glycine-cleavage complex H protein] + CO2</text>
        <dbReference type="Rhea" id="RHEA:24304"/>
        <dbReference type="Rhea" id="RHEA-COMP:10494"/>
        <dbReference type="Rhea" id="RHEA-COMP:10495"/>
        <dbReference type="ChEBI" id="CHEBI:15378"/>
        <dbReference type="ChEBI" id="CHEBI:16526"/>
        <dbReference type="ChEBI" id="CHEBI:57305"/>
        <dbReference type="ChEBI" id="CHEBI:83099"/>
        <dbReference type="ChEBI" id="CHEBI:83143"/>
        <dbReference type="EC" id="1.4.4.2"/>
    </reaction>
</comment>
<comment type="cofactor">
    <cofactor evidence="1">
        <name>pyridoxal 5'-phosphate</name>
        <dbReference type="ChEBI" id="CHEBI:597326"/>
    </cofactor>
</comment>
<comment type="subunit">
    <text evidence="1">The glycine cleavage system is composed of four proteins: P, T, L and H. In this organism, the P 'protein' is a heterodimer of two subunits.</text>
</comment>
<comment type="similarity">
    <text evidence="1">Belongs to the GcvP family. C-terminal subunit subfamily.</text>
</comment>
<evidence type="ECO:0000255" key="1">
    <source>
        <dbReference type="HAMAP-Rule" id="MF_00713"/>
    </source>
</evidence>